<organism>
    <name type="scientific">Streptococcus pyogenes serotype M18 (strain MGAS8232)</name>
    <dbReference type="NCBI Taxonomy" id="186103"/>
    <lineage>
        <taxon>Bacteria</taxon>
        <taxon>Bacillati</taxon>
        <taxon>Bacillota</taxon>
        <taxon>Bacilli</taxon>
        <taxon>Lactobacillales</taxon>
        <taxon>Streptococcaceae</taxon>
        <taxon>Streptococcus</taxon>
    </lineage>
</organism>
<name>MNMA_STRP8</name>
<reference key="1">
    <citation type="journal article" date="2002" name="Proc. Natl. Acad. Sci. U.S.A.">
        <title>Genome sequence and comparative microarray analysis of serotype M18 group A Streptococcus strains associated with acute rheumatic fever outbreaks.</title>
        <authorList>
            <person name="Smoot J.C."/>
            <person name="Barbian K.D."/>
            <person name="Van Gompel J.J."/>
            <person name="Smoot L.M."/>
            <person name="Chaussee M.S."/>
            <person name="Sylva G.L."/>
            <person name="Sturdevant D.E."/>
            <person name="Ricklefs S.M."/>
            <person name="Porcella S.F."/>
            <person name="Parkins L.D."/>
            <person name="Beres S.B."/>
            <person name="Campbell D.S."/>
            <person name="Smith T.M."/>
            <person name="Zhang Q."/>
            <person name="Kapur V."/>
            <person name="Daly J.A."/>
            <person name="Veasy L.G."/>
            <person name="Musser J.M."/>
        </authorList>
    </citation>
    <scope>NUCLEOTIDE SEQUENCE [LARGE SCALE GENOMIC DNA]</scope>
    <source>
        <strain>MGAS8232</strain>
    </source>
</reference>
<accession>Q8NZ00</accession>
<keyword id="KW-0067">ATP-binding</keyword>
<keyword id="KW-0963">Cytoplasm</keyword>
<keyword id="KW-1015">Disulfide bond</keyword>
<keyword id="KW-0547">Nucleotide-binding</keyword>
<keyword id="KW-0694">RNA-binding</keyword>
<keyword id="KW-0808">Transferase</keyword>
<keyword id="KW-0819">tRNA processing</keyword>
<keyword id="KW-0820">tRNA-binding</keyword>
<gene>
    <name evidence="1" type="primary">mnmA</name>
    <name type="synonym">trmU</name>
    <name type="ordered locus">spyM18_2222</name>
</gene>
<feature type="chain" id="PRO_0000121690" description="tRNA-specific 2-thiouridylase MnmA">
    <location>
        <begin position="1"/>
        <end position="373"/>
    </location>
</feature>
<feature type="region of interest" description="Interaction with target base in tRNA" evidence="1">
    <location>
        <begin position="98"/>
        <end position="100"/>
    </location>
</feature>
<feature type="region of interest" description="Interaction with tRNA" evidence="1">
    <location>
        <begin position="150"/>
        <end position="152"/>
    </location>
</feature>
<feature type="region of interest" description="Interaction with tRNA" evidence="1">
    <location>
        <begin position="312"/>
        <end position="313"/>
    </location>
</feature>
<feature type="active site" description="Nucleophile" evidence="1">
    <location>
        <position position="103"/>
    </location>
</feature>
<feature type="active site" description="Cysteine persulfide intermediate" evidence="1">
    <location>
        <position position="200"/>
    </location>
</feature>
<feature type="binding site" evidence="1">
    <location>
        <begin position="12"/>
        <end position="19"/>
    </location>
    <ligand>
        <name>ATP</name>
        <dbReference type="ChEBI" id="CHEBI:30616"/>
    </ligand>
</feature>
<feature type="binding site" evidence="1">
    <location>
        <position position="38"/>
    </location>
    <ligand>
        <name>ATP</name>
        <dbReference type="ChEBI" id="CHEBI:30616"/>
    </ligand>
</feature>
<feature type="binding site" evidence="1">
    <location>
        <position position="127"/>
    </location>
    <ligand>
        <name>ATP</name>
        <dbReference type="ChEBI" id="CHEBI:30616"/>
    </ligand>
</feature>
<feature type="site" description="Interaction with tRNA" evidence="1">
    <location>
        <position position="128"/>
    </location>
</feature>
<feature type="site" description="Interaction with tRNA" evidence="1">
    <location>
        <position position="344"/>
    </location>
</feature>
<feature type="disulfide bond" description="Alternate" evidence="1">
    <location>
        <begin position="103"/>
        <end position="200"/>
    </location>
</feature>
<comment type="function">
    <text evidence="1">Catalyzes the 2-thiolation of uridine at the wobble position (U34) of tRNA, leading to the formation of s(2)U34.</text>
</comment>
<comment type="catalytic activity">
    <reaction evidence="1">
        <text>S-sulfanyl-L-cysteinyl-[protein] + uridine(34) in tRNA + AH2 + ATP = 2-thiouridine(34) in tRNA + L-cysteinyl-[protein] + A + AMP + diphosphate + H(+)</text>
        <dbReference type="Rhea" id="RHEA:47032"/>
        <dbReference type="Rhea" id="RHEA-COMP:10131"/>
        <dbReference type="Rhea" id="RHEA-COMP:11726"/>
        <dbReference type="Rhea" id="RHEA-COMP:11727"/>
        <dbReference type="Rhea" id="RHEA-COMP:11728"/>
        <dbReference type="ChEBI" id="CHEBI:13193"/>
        <dbReference type="ChEBI" id="CHEBI:15378"/>
        <dbReference type="ChEBI" id="CHEBI:17499"/>
        <dbReference type="ChEBI" id="CHEBI:29950"/>
        <dbReference type="ChEBI" id="CHEBI:30616"/>
        <dbReference type="ChEBI" id="CHEBI:33019"/>
        <dbReference type="ChEBI" id="CHEBI:61963"/>
        <dbReference type="ChEBI" id="CHEBI:65315"/>
        <dbReference type="ChEBI" id="CHEBI:87170"/>
        <dbReference type="ChEBI" id="CHEBI:456215"/>
        <dbReference type="EC" id="2.8.1.13"/>
    </reaction>
</comment>
<comment type="subcellular location">
    <subcellularLocation>
        <location evidence="1">Cytoplasm</location>
    </subcellularLocation>
</comment>
<comment type="similarity">
    <text evidence="1">Belongs to the MnmA/TRMU family.</text>
</comment>
<comment type="sequence caution" evidence="2">
    <conflict type="erroneous initiation">
        <sequence resource="EMBL-CDS" id="AAL98656"/>
    </conflict>
</comment>
<protein>
    <recommendedName>
        <fullName evidence="1">tRNA-specific 2-thiouridylase MnmA</fullName>
        <ecNumber evidence="1">2.8.1.13</ecNumber>
    </recommendedName>
</protein>
<evidence type="ECO:0000255" key="1">
    <source>
        <dbReference type="HAMAP-Rule" id="MF_00144"/>
    </source>
</evidence>
<evidence type="ECO:0000305" key="2"/>
<proteinExistence type="inferred from homology"/>
<sequence length="373" mass="41733">MTDNSKIRVVVGMSGGVDSSVTALLLKEQGYDVIGVFMKNWDDTDEFGVCTATEDYKDVAAVADQIGIPYYSVNFEKEYWDRVFEYFLAEYRAGRTPNPDVMCNKEIKFKAFLGYAMTLGADYVATGHYAQVKRDENGTVHMLRGADNGKDQTYFLSQLSQEQLQKTLFPLGHLQKSEVREIAERAGLATAKKKDSTGICFIGEKNFKQFLSQYLPAQKGRMMTIDGRDMGEHAGLMYYTIGQRGGLGIGGQHGGDNQPWFVVGKDLSQNILYVGQGFYHEALMSNSLDASVIHFTREMPEEFTFECTAKFRYRQPDSQVTVHVRGDKAEVVFAEPQRAITPGQAVVFYDGKECLGGGMIDMAYKNGQPCQYI</sequence>
<dbReference type="EC" id="2.8.1.13" evidence="1"/>
<dbReference type="EMBL" id="AE009949">
    <property type="protein sequence ID" value="AAL98656.1"/>
    <property type="status" value="ALT_INIT"/>
    <property type="molecule type" value="Genomic_DNA"/>
</dbReference>
<dbReference type="RefSeq" id="WP_023079620.1">
    <property type="nucleotide sequence ID" value="NC_003485.1"/>
</dbReference>
<dbReference type="SMR" id="Q8NZ00"/>
<dbReference type="KEGG" id="spm:spyM18_2222"/>
<dbReference type="HOGENOM" id="CLU_035188_1_0_9"/>
<dbReference type="GO" id="GO:0005737">
    <property type="term" value="C:cytoplasm"/>
    <property type="evidence" value="ECO:0007669"/>
    <property type="project" value="UniProtKB-SubCell"/>
</dbReference>
<dbReference type="GO" id="GO:0005524">
    <property type="term" value="F:ATP binding"/>
    <property type="evidence" value="ECO:0007669"/>
    <property type="project" value="UniProtKB-KW"/>
</dbReference>
<dbReference type="GO" id="GO:0000049">
    <property type="term" value="F:tRNA binding"/>
    <property type="evidence" value="ECO:0007669"/>
    <property type="project" value="UniProtKB-KW"/>
</dbReference>
<dbReference type="GO" id="GO:0103016">
    <property type="term" value="F:tRNA-uridine 2-sulfurtransferase activity"/>
    <property type="evidence" value="ECO:0007669"/>
    <property type="project" value="UniProtKB-EC"/>
</dbReference>
<dbReference type="GO" id="GO:0002143">
    <property type="term" value="P:tRNA wobble position uridine thiolation"/>
    <property type="evidence" value="ECO:0007669"/>
    <property type="project" value="TreeGrafter"/>
</dbReference>
<dbReference type="CDD" id="cd01998">
    <property type="entry name" value="MnmA_TRMU-like"/>
    <property type="match status" value="1"/>
</dbReference>
<dbReference type="FunFam" id="2.30.30.280:FF:000001">
    <property type="entry name" value="tRNA-specific 2-thiouridylase MnmA"/>
    <property type="match status" value="1"/>
</dbReference>
<dbReference type="FunFam" id="2.40.30.10:FF:000023">
    <property type="entry name" value="tRNA-specific 2-thiouridylase MnmA"/>
    <property type="match status" value="1"/>
</dbReference>
<dbReference type="FunFam" id="3.40.50.620:FF:000004">
    <property type="entry name" value="tRNA-specific 2-thiouridylase MnmA"/>
    <property type="match status" value="1"/>
</dbReference>
<dbReference type="Gene3D" id="2.30.30.280">
    <property type="entry name" value="Adenine nucleotide alpha hydrolases-like domains"/>
    <property type="match status" value="1"/>
</dbReference>
<dbReference type="Gene3D" id="3.40.50.620">
    <property type="entry name" value="HUPs"/>
    <property type="match status" value="1"/>
</dbReference>
<dbReference type="Gene3D" id="2.40.30.10">
    <property type="entry name" value="Translation factors"/>
    <property type="match status" value="1"/>
</dbReference>
<dbReference type="HAMAP" id="MF_00144">
    <property type="entry name" value="tRNA_thiouridyl_MnmA"/>
    <property type="match status" value="1"/>
</dbReference>
<dbReference type="InterPro" id="IPR004506">
    <property type="entry name" value="MnmA-like"/>
</dbReference>
<dbReference type="InterPro" id="IPR046885">
    <property type="entry name" value="MnmA-like_C"/>
</dbReference>
<dbReference type="InterPro" id="IPR046884">
    <property type="entry name" value="MnmA-like_central"/>
</dbReference>
<dbReference type="InterPro" id="IPR023382">
    <property type="entry name" value="MnmA-like_central_sf"/>
</dbReference>
<dbReference type="InterPro" id="IPR014729">
    <property type="entry name" value="Rossmann-like_a/b/a_fold"/>
</dbReference>
<dbReference type="NCBIfam" id="NF001138">
    <property type="entry name" value="PRK00143.1"/>
    <property type="match status" value="1"/>
</dbReference>
<dbReference type="NCBIfam" id="TIGR00420">
    <property type="entry name" value="trmU"/>
    <property type="match status" value="1"/>
</dbReference>
<dbReference type="PANTHER" id="PTHR11933:SF5">
    <property type="entry name" value="MITOCHONDRIAL TRNA-SPECIFIC 2-THIOURIDYLASE 1"/>
    <property type="match status" value="1"/>
</dbReference>
<dbReference type="PANTHER" id="PTHR11933">
    <property type="entry name" value="TRNA 5-METHYLAMINOMETHYL-2-THIOURIDYLATE -METHYLTRANSFERASE"/>
    <property type="match status" value="1"/>
</dbReference>
<dbReference type="Pfam" id="PF03054">
    <property type="entry name" value="tRNA_Me_trans"/>
    <property type="match status" value="1"/>
</dbReference>
<dbReference type="Pfam" id="PF20258">
    <property type="entry name" value="tRNA_Me_trans_C"/>
    <property type="match status" value="1"/>
</dbReference>
<dbReference type="Pfam" id="PF20259">
    <property type="entry name" value="tRNA_Me_trans_M"/>
    <property type="match status" value="1"/>
</dbReference>
<dbReference type="SUPFAM" id="SSF52402">
    <property type="entry name" value="Adenine nucleotide alpha hydrolases-like"/>
    <property type="match status" value="1"/>
</dbReference>